<gene>
    <name evidence="1 2" type="primary">coaD</name>
    <name type="synonym">ylbI</name>
    <name type="ordered locus">BSU15020</name>
</gene>
<reference key="1">
    <citation type="submission" date="1997-08" db="EMBL/GenBank/DDBJ databases">
        <title>Bacillus subtilis chromosomal region downstream nprE.</title>
        <authorList>
            <person name="Bertero M."/>
            <person name="Presecan E."/>
            <person name="Glaser P."/>
            <person name="Richou A."/>
            <person name="Danchin A."/>
        </authorList>
    </citation>
    <scope>NUCLEOTIDE SEQUENCE [GENOMIC DNA]</scope>
    <source>
        <strain>168</strain>
    </source>
</reference>
<reference key="2">
    <citation type="journal article" date="1997" name="Nature">
        <title>The complete genome sequence of the Gram-positive bacterium Bacillus subtilis.</title>
        <authorList>
            <person name="Kunst F."/>
            <person name="Ogasawara N."/>
            <person name="Moszer I."/>
            <person name="Albertini A.M."/>
            <person name="Alloni G."/>
            <person name="Azevedo V."/>
            <person name="Bertero M.G."/>
            <person name="Bessieres P."/>
            <person name="Bolotin A."/>
            <person name="Borchert S."/>
            <person name="Borriss R."/>
            <person name="Boursier L."/>
            <person name="Brans A."/>
            <person name="Braun M."/>
            <person name="Brignell S.C."/>
            <person name="Bron S."/>
            <person name="Brouillet S."/>
            <person name="Bruschi C.V."/>
            <person name="Caldwell B."/>
            <person name="Capuano V."/>
            <person name="Carter N.M."/>
            <person name="Choi S.-K."/>
            <person name="Codani J.-J."/>
            <person name="Connerton I.F."/>
            <person name="Cummings N.J."/>
            <person name="Daniel R.A."/>
            <person name="Denizot F."/>
            <person name="Devine K.M."/>
            <person name="Duesterhoeft A."/>
            <person name="Ehrlich S.D."/>
            <person name="Emmerson P.T."/>
            <person name="Entian K.-D."/>
            <person name="Errington J."/>
            <person name="Fabret C."/>
            <person name="Ferrari E."/>
            <person name="Foulger D."/>
            <person name="Fritz C."/>
            <person name="Fujita M."/>
            <person name="Fujita Y."/>
            <person name="Fuma S."/>
            <person name="Galizzi A."/>
            <person name="Galleron N."/>
            <person name="Ghim S.-Y."/>
            <person name="Glaser P."/>
            <person name="Goffeau A."/>
            <person name="Golightly E.J."/>
            <person name="Grandi G."/>
            <person name="Guiseppi G."/>
            <person name="Guy B.J."/>
            <person name="Haga K."/>
            <person name="Haiech J."/>
            <person name="Harwood C.R."/>
            <person name="Henaut A."/>
            <person name="Hilbert H."/>
            <person name="Holsappel S."/>
            <person name="Hosono S."/>
            <person name="Hullo M.-F."/>
            <person name="Itaya M."/>
            <person name="Jones L.-M."/>
            <person name="Joris B."/>
            <person name="Karamata D."/>
            <person name="Kasahara Y."/>
            <person name="Klaerr-Blanchard M."/>
            <person name="Klein C."/>
            <person name="Kobayashi Y."/>
            <person name="Koetter P."/>
            <person name="Koningstein G."/>
            <person name="Krogh S."/>
            <person name="Kumano M."/>
            <person name="Kurita K."/>
            <person name="Lapidus A."/>
            <person name="Lardinois S."/>
            <person name="Lauber J."/>
            <person name="Lazarevic V."/>
            <person name="Lee S.-M."/>
            <person name="Levine A."/>
            <person name="Liu H."/>
            <person name="Masuda S."/>
            <person name="Mauel C."/>
            <person name="Medigue C."/>
            <person name="Medina N."/>
            <person name="Mellado R.P."/>
            <person name="Mizuno M."/>
            <person name="Moestl D."/>
            <person name="Nakai S."/>
            <person name="Noback M."/>
            <person name="Noone D."/>
            <person name="O'Reilly M."/>
            <person name="Ogawa K."/>
            <person name="Ogiwara A."/>
            <person name="Oudega B."/>
            <person name="Park S.-H."/>
            <person name="Parro V."/>
            <person name="Pohl T.M."/>
            <person name="Portetelle D."/>
            <person name="Porwollik S."/>
            <person name="Prescott A.M."/>
            <person name="Presecan E."/>
            <person name="Pujic P."/>
            <person name="Purnelle B."/>
            <person name="Rapoport G."/>
            <person name="Rey M."/>
            <person name="Reynolds S."/>
            <person name="Rieger M."/>
            <person name="Rivolta C."/>
            <person name="Rocha E."/>
            <person name="Roche B."/>
            <person name="Rose M."/>
            <person name="Sadaie Y."/>
            <person name="Sato T."/>
            <person name="Scanlan E."/>
            <person name="Schleich S."/>
            <person name="Schroeter R."/>
            <person name="Scoffone F."/>
            <person name="Sekiguchi J."/>
            <person name="Sekowska A."/>
            <person name="Seror S.J."/>
            <person name="Serror P."/>
            <person name="Shin B.-S."/>
            <person name="Soldo B."/>
            <person name="Sorokin A."/>
            <person name="Tacconi E."/>
            <person name="Takagi T."/>
            <person name="Takahashi H."/>
            <person name="Takemaru K."/>
            <person name="Takeuchi M."/>
            <person name="Tamakoshi A."/>
            <person name="Tanaka T."/>
            <person name="Terpstra P."/>
            <person name="Tognoni A."/>
            <person name="Tosato V."/>
            <person name="Uchiyama S."/>
            <person name="Vandenbol M."/>
            <person name="Vannier F."/>
            <person name="Vassarotti A."/>
            <person name="Viari A."/>
            <person name="Wambutt R."/>
            <person name="Wedler E."/>
            <person name="Wedler H."/>
            <person name="Weitzenegger T."/>
            <person name="Winters P."/>
            <person name="Wipat A."/>
            <person name="Yamamoto H."/>
            <person name="Yamane K."/>
            <person name="Yasumoto K."/>
            <person name="Yata K."/>
            <person name="Yoshida K."/>
            <person name="Yoshikawa H.-F."/>
            <person name="Zumstein E."/>
            <person name="Yoshikawa H."/>
            <person name="Danchin A."/>
        </authorList>
    </citation>
    <scope>NUCLEOTIDE SEQUENCE [LARGE SCALE GENOMIC DNA]</scope>
    <source>
        <strain>168</strain>
    </source>
</reference>
<reference key="3">
    <citation type="journal article" date="2005" name="Proteins">
        <title>Structural analysis of a set of proteins resulting from a bacterial genomics project.</title>
        <authorList>
            <person name="Badger J."/>
            <person name="Sauder J.M."/>
            <person name="Adams J.M."/>
            <person name="Antonysamy S."/>
            <person name="Bain K."/>
            <person name="Bergseid M.G."/>
            <person name="Buchanan S.G."/>
            <person name="Buchanan M.D."/>
            <person name="Batiyenko Y."/>
            <person name="Christopher J.A."/>
            <person name="Emtage S."/>
            <person name="Eroshkina A."/>
            <person name="Feil I."/>
            <person name="Furlong E.B."/>
            <person name="Gajiwala K.S."/>
            <person name="Gao X."/>
            <person name="He D."/>
            <person name="Hendle J."/>
            <person name="Huber A."/>
            <person name="Hoda K."/>
            <person name="Kearins P."/>
            <person name="Kissinger C."/>
            <person name="Laubert B."/>
            <person name="Lewis H.A."/>
            <person name="Lin J."/>
            <person name="Loomis K."/>
            <person name="Lorimer D."/>
            <person name="Louie G."/>
            <person name="Maletic M."/>
            <person name="Marsh C.D."/>
            <person name="Miller I."/>
            <person name="Molinari J."/>
            <person name="Muller-Dieckmann H.J."/>
            <person name="Newman J.M."/>
            <person name="Noland B.W."/>
            <person name="Pagarigan B."/>
            <person name="Park F."/>
            <person name="Peat T.S."/>
            <person name="Post K.W."/>
            <person name="Radojicic S."/>
            <person name="Ramos A."/>
            <person name="Romero R."/>
            <person name="Rutter M.E."/>
            <person name="Sanderson W.E."/>
            <person name="Schwinn K.D."/>
            <person name="Tresser J."/>
            <person name="Winhoven J."/>
            <person name="Wright T.A."/>
            <person name="Wu L."/>
            <person name="Xu J."/>
            <person name="Harris T.J.R."/>
        </authorList>
    </citation>
    <scope>X-RAY CRYSTALLOGRAPHY (2.20 ANGSTROMS) OF 2-161 IN COMPLEX WITH ADP</scope>
</reference>
<proteinExistence type="evidence at protein level"/>
<name>COAD_BACSU</name>
<organism>
    <name type="scientific">Bacillus subtilis (strain 168)</name>
    <dbReference type="NCBI Taxonomy" id="224308"/>
    <lineage>
        <taxon>Bacteria</taxon>
        <taxon>Bacillati</taxon>
        <taxon>Bacillota</taxon>
        <taxon>Bacilli</taxon>
        <taxon>Bacillales</taxon>
        <taxon>Bacillaceae</taxon>
        <taxon>Bacillus</taxon>
    </lineage>
</organism>
<protein>
    <recommendedName>
        <fullName evidence="1">Phosphopantetheine adenylyltransferase</fullName>
        <ecNumber evidence="1">2.7.7.3</ecNumber>
    </recommendedName>
    <alternativeName>
        <fullName evidence="1">Dephospho-CoA pyrophosphorylase</fullName>
    </alternativeName>
    <alternativeName>
        <fullName evidence="1">Pantetheine-phosphate adenylyltransferase</fullName>
        <shortName evidence="1">PPAT</shortName>
    </alternativeName>
</protein>
<keyword id="KW-0002">3D-structure</keyword>
<keyword id="KW-0067">ATP-binding</keyword>
<keyword id="KW-0173">Coenzyme A biosynthesis</keyword>
<keyword id="KW-0963">Cytoplasm</keyword>
<keyword id="KW-0460">Magnesium</keyword>
<keyword id="KW-0547">Nucleotide-binding</keyword>
<keyword id="KW-0548">Nucleotidyltransferase</keyword>
<keyword id="KW-1185">Reference proteome</keyword>
<keyword id="KW-0808">Transferase</keyword>
<comment type="function">
    <text evidence="1">Reversibly transfers an adenylyl group from ATP to 4'-phosphopantetheine, yielding dephospho-CoA (dPCoA) and pyrophosphate.</text>
</comment>
<comment type="catalytic activity">
    <reaction evidence="1">
        <text>(R)-4'-phosphopantetheine + ATP + H(+) = 3'-dephospho-CoA + diphosphate</text>
        <dbReference type="Rhea" id="RHEA:19801"/>
        <dbReference type="ChEBI" id="CHEBI:15378"/>
        <dbReference type="ChEBI" id="CHEBI:30616"/>
        <dbReference type="ChEBI" id="CHEBI:33019"/>
        <dbReference type="ChEBI" id="CHEBI:57328"/>
        <dbReference type="ChEBI" id="CHEBI:61723"/>
        <dbReference type="EC" id="2.7.7.3"/>
    </reaction>
</comment>
<comment type="cofactor">
    <cofactor evidence="1">
        <name>Mg(2+)</name>
        <dbReference type="ChEBI" id="CHEBI:18420"/>
    </cofactor>
</comment>
<comment type="pathway">
    <text evidence="1">Cofactor biosynthesis; coenzyme A biosynthesis; CoA from (R)-pantothenate: step 4/5.</text>
</comment>
<comment type="subunit">
    <text evidence="1">Homohexamer.</text>
</comment>
<comment type="subcellular location">
    <subcellularLocation>
        <location evidence="1">Cytoplasm</location>
    </subcellularLocation>
</comment>
<comment type="similarity">
    <text evidence="1">Belongs to the bacterial CoaD family.</text>
</comment>
<sequence>MASIAVCPGSFDPVTYGHLDIIKRGAHIFEQVYVCVLNNSSKKPLFSVEERCELLREVTKDIPNITVETSQGLLIDYAKRKNAKAILRGLRAVSDFEYEMQGTSVNRVLDESIETFFMMTNNQYSFLSSSIVKEVARYNGSVSEFVPPEVELALQQKFRQG</sequence>
<feature type="chain" id="PRO_0000156169" description="Phosphopantetheine adenylyltransferase">
    <location>
        <begin position="1"/>
        <end position="161"/>
    </location>
</feature>
<feature type="binding site" evidence="1 3 4">
    <location>
        <begin position="10"/>
        <end position="11"/>
    </location>
    <ligand>
        <name>ATP</name>
        <dbReference type="ChEBI" id="CHEBI:30616"/>
    </ligand>
</feature>
<feature type="binding site" evidence="1">
    <location>
        <position position="10"/>
    </location>
    <ligand>
        <name>substrate</name>
    </ligand>
</feature>
<feature type="binding site" evidence="1 3 4">
    <location>
        <position position="18"/>
    </location>
    <ligand>
        <name>ATP</name>
        <dbReference type="ChEBI" id="CHEBI:30616"/>
    </ligand>
</feature>
<feature type="binding site" evidence="1">
    <location>
        <position position="42"/>
    </location>
    <ligand>
        <name>substrate</name>
    </ligand>
</feature>
<feature type="binding site" evidence="1">
    <location>
        <position position="74"/>
    </location>
    <ligand>
        <name>substrate</name>
    </ligand>
</feature>
<feature type="binding site" evidence="3 4">
    <location>
        <begin position="88"/>
        <end position="89"/>
    </location>
    <ligand>
        <name>ATP</name>
        <dbReference type="ChEBI" id="CHEBI:30616"/>
    </ligand>
</feature>
<feature type="binding site" evidence="1">
    <location>
        <position position="88"/>
    </location>
    <ligand>
        <name>substrate</name>
    </ligand>
</feature>
<feature type="binding site" evidence="1">
    <location>
        <position position="99"/>
    </location>
    <ligand>
        <name>ATP</name>
        <dbReference type="ChEBI" id="CHEBI:30616"/>
    </ligand>
</feature>
<feature type="binding site" evidence="1 3">
    <location>
        <begin position="124"/>
        <end position="130"/>
    </location>
    <ligand>
        <name>ATP</name>
        <dbReference type="ChEBI" id="CHEBI:30616"/>
    </ligand>
</feature>
<feature type="site" description="Transition state stabilizer" evidence="1">
    <location>
        <position position="18"/>
    </location>
</feature>
<feature type="strand" evidence="5">
    <location>
        <begin position="4"/>
        <end position="9"/>
    </location>
</feature>
<feature type="helix" evidence="5">
    <location>
        <begin position="16"/>
        <end position="28"/>
    </location>
</feature>
<feature type="strand" evidence="5">
    <location>
        <begin position="29"/>
        <end position="36"/>
    </location>
</feature>
<feature type="helix" evidence="5">
    <location>
        <begin position="48"/>
        <end position="59"/>
    </location>
</feature>
<feature type="strand" evidence="5">
    <location>
        <begin position="65"/>
        <end position="69"/>
    </location>
</feature>
<feature type="helix" evidence="5">
    <location>
        <begin position="74"/>
        <end position="80"/>
    </location>
</feature>
<feature type="strand" evidence="5">
    <location>
        <begin position="84"/>
        <end position="90"/>
    </location>
</feature>
<feature type="helix" evidence="5">
    <location>
        <begin position="93"/>
        <end position="95"/>
    </location>
</feature>
<feature type="helix" evidence="5">
    <location>
        <begin position="96"/>
        <end position="109"/>
    </location>
</feature>
<feature type="strand" evidence="5">
    <location>
        <begin position="113"/>
        <end position="119"/>
    </location>
</feature>
<feature type="turn" evidence="5">
    <location>
        <begin position="123"/>
        <end position="126"/>
    </location>
</feature>
<feature type="helix" evidence="5">
    <location>
        <begin position="129"/>
        <end position="137"/>
    </location>
</feature>
<feature type="turn" evidence="5">
    <location>
        <begin position="143"/>
        <end position="145"/>
    </location>
</feature>
<feature type="helix" evidence="5">
    <location>
        <begin position="148"/>
        <end position="159"/>
    </location>
</feature>
<evidence type="ECO:0000255" key="1">
    <source>
        <dbReference type="HAMAP-Rule" id="MF_00151"/>
    </source>
</evidence>
<evidence type="ECO:0000303" key="2">
    <source>
    </source>
</evidence>
<evidence type="ECO:0000305" key="3">
    <source>
    </source>
</evidence>
<evidence type="ECO:0007744" key="4">
    <source>
        <dbReference type="PDB" id="1O6B"/>
    </source>
</evidence>
<evidence type="ECO:0007829" key="5">
    <source>
        <dbReference type="PDB" id="1O6B"/>
    </source>
</evidence>
<dbReference type="EC" id="2.7.7.3" evidence="1"/>
<dbReference type="EMBL" id="Z98682">
    <property type="protein sequence ID" value="CAB11355.1"/>
    <property type="molecule type" value="Genomic_DNA"/>
</dbReference>
<dbReference type="EMBL" id="AL009126">
    <property type="protein sequence ID" value="CAB13375.1"/>
    <property type="molecule type" value="Genomic_DNA"/>
</dbReference>
<dbReference type="PIR" id="F69874">
    <property type="entry name" value="F69874"/>
</dbReference>
<dbReference type="RefSeq" id="NP_389385.1">
    <property type="nucleotide sequence ID" value="NC_000964.3"/>
</dbReference>
<dbReference type="RefSeq" id="WP_003245283.1">
    <property type="nucleotide sequence ID" value="NZ_OZ025638.1"/>
</dbReference>
<dbReference type="PDB" id="1O6B">
    <property type="method" value="X-ray"/>
    <property type="resolution" value="2.20 A"/>
    <property type="chains" value="A=2-161"/>
</dbReference>
<dbReference type="PDBsum" id="1O6B"/>
<dbReference type="SMR" id="O34797"/>
<dbReference type="FunCoup" id="O34797">
    <property type="interactions" value="645"/>
</dbReference>
<dbReference type="STRING" id="224308.BSU15020"/>
<dbReference type="PaxDb" id="224308-BSU15020"/>
<dbReference type="EnsemblBacteria" id="CAB13375">
    <property type="protein sequence ID" value="CAB13375"/>
    <property type="gene ID" value="BSU_15020"/>
</dbReference>
<dbReference type="GeneID" id="936889"/>
<dbReference type="KEGG" id="bsu:BSU15020"/>
<dbReference type="PATRIC" id="fig|224308.179.peg.1637"/>
<dbReference type="eggNOG" id="COG0669">
    <property type="taxonomic scope" value="Bacteria"/>
</dbReference>
<dbReference type="InParanoid" id="O34797"/>
<dbReference type="OrthoDB" id="9806661at2"/>
<dbReference type="PhylomeDB" id="O34797"/>
<dbReference type="BioCyc" id="BSUB:BSU15020-MONOMER"/>
<dbReference type="UniPathway" id="UPA00241">
    <property type="reaction ID" value="UER00355"/>
</dbReference>
<dbReference type="EvolutionaryTrace" id="O34797"/>
<dbReference type="Proteomes" id="UP000001570">
    <property type="component" value="Chromosome"/>
</dbReference>
<dbReference type="GO" id="GO:0005737">
    <property type="term" value="C:cytoplasm"/>
    <property type="evidence" value="ECO:0007669"/>
    <property type="project" value="UniProtKB-SubCell"/>
</dbReference>
<dbReference type="GO" id="GO:0005524">
    <property type="term" value="F:ATP binding"/>
    <property type="evidence" value="ECO:0007669"/>
    <property type="project" value="UniProtKB-KW"/>
</dbReference>
<dbReference type="GO" id="GO:0004595">
    <property type="term" value="F:pantetheine-phosphate adenylyltransferase activity"/>
    <property type="evidence" value="ECO:0000318"/>
    <property type="project" value="GO_Central"/>
</dbReference>
<dbReference type="GO" id="GO:0015937">
    <property type="term" value="P:coenzyme A biosynthetic process"/>
    <property type="evidence" value="ECO:0000318"/>
    <property type="project" value="GO_Central"/>
</dbReference>
<dbReference type="CDD" id="cd02163">
    <property type="entry name" value="PPAT"/>
    <property type="match status" value="1"/>
</dbReference>
<dbReference type="FunFam" id="3.40.50.620:FF:000012">
    <property type="entry name" value="Phosphopantetheine adenylyltransferase"/>
    <property type="match status" value="1"/>
</dbReference>
<dbReference type="Gene3D" id="3.40.50.620">
    <property type="entry name" value="HUPs"/>
    <property type="match status" value="1"/>
</dbReference>
<dbReference type="HAMAP" id="MF_00151">
    <property type="entry name" value="PPAT_bact"/>
    <property type="match status" value="1"/>
</dbReference>
<dbReference type="InterPro" id="IPR004821">
    <property type="entry name" value="Cyt_trans-like"/>
</dbReference>
<dbReference type="InterPro" id="IPR001980">
    <property type="entry name" value="PPAT"/>
</dbReference>
<dbReference type="InterPro" id="IPR014729">
    <property type="entry name" value="Rossmann-like_a/b/a_fold"/>
</dbReference>
<dbReference type="NCBIfam" id="TIGR01510">
    <property type="entry name" value="coaD_prev_kdtB"/>
    <property type="match status" value="1"/>
</dbReference>
<dbReference type="NCBIfam" id="TIGR00125">
    <property type="entry name" value="cyt_tran_rel"/>
    <property type="match status" value="1"/>
</dbReference>
<dbReference type="PANTHER" id="PTHR21342">
    <property type="entry name" value="PHOSPHOPANTETHEINE ADENYLYLTRANSFERASE"/>
    <property type="match status" value="1"/>
</dbReference>
<dbReference type="PANTHER" id="PTHR21342:SF1">
    <property type="entry name" value="PHOSPHOPANTETHEINE ADENYLYLTRANSFERASE"/>
    <property type="match status" value="1"/>
</dbReference>
<dbReference type="Pfam" id="PF01467">
    <property type="entry name" value="CTP_transf_like"/>
    <property type="match status" value="1"/>
</dbReference>
<dbReference type="PRINTS" id="PR01020">
    <property type="entry name" value="LPSBIOSNTHSS"/>
</dbReference>
<dbReference type="SUPFAM" id="SSF52374">
    <property type="entry name" value="Nucleotidylyl transferase"/>
    <property type="match status" value="1"/>
</dbReference>
<accession>O34797</accession>